<reference key="1">
    <citation type="journal article" date="2002" name="J. Mol. Biol.">
        <title>Bacteriophage Mu genome sequence: analysis and comparison with Mu-like prophages in Haemophilus, Neisseria and Deinococcus.</title>
        <authorList>
            <person name="Morgan G.J."/>
            <person name="Hatfull G.F."/>
            <person name="Casjens S."/>
            <person name="Hendrix R.W."/>
        </authorList>
    </citation>
    <scope>NUCLEOTIDE SEQUENCE [LARGE SCALE GENOMIC DNA]</scope>
</reference>
<reference key="2">
    <citation type="journal article" date="1985" name="Virology">
        <title>Morphogenetic structures present in lysates of amber mutants of bacteriophage Mu.</title>
        <authorList>
            <person name="Grundy F.J."/>
            <person name="Howe M.M."/>
        </authorList>
    </citation>
    <scope>DISRUPTION PHENOTYPE</scope>
</reference>
<reference key="3">
    <citation type="journal article" date="1993" name="Genetics">
        <title>Mutational analysis of a C-dependent late promoter of bacteriophage Mu.</title>
        <authorList>
            <person name="Chiang L.W."/>
            <person name="Howe M.M."/>
        </authorList>
    </citation>
    <scope>INDUCTION</scope>
</reference>
<reference key="4">
    <citation type="journal article" date="2012" name="Adv. Exp. Med. Biol.">
        <title>Contractile tail machines of bacteriophages.</title>
        <authorList>
            <person name="Leiman P.G."/>
            <person name="Shneider M.M."/>
        </authorList>
    </citation>
    <scope>REVIEW</scope>
</reference>
<reference key="5">
    <citation type="journal article" date="2016" name="Proc. Natl. Acad. Sci. U.S.A.">
        <title>Baseplate assembly of phage Mu: Defining the conserved core components of contractile-tailed phages and related bacterial systems.</title>
        <authorList>
            <person name="Buettner C.R."/>
            <person name="Wu Y."/>
            <person name="Maxwell K.L."/>
            <person name="Davidson A.R."/>
        </authorList>
    </citation>
    <scope>SUBUNIT</scope>
    <scope>SUBCELLULAR LOCATION</scope>
</reference>
<sequence length="360" mass="38691">MAYSPPTLSSLIARTEQNIEQRLPGSWPQAREKTLSAIAYAQAGLAAGCHEHISWVGRQIIPSTADEDELLEHCRFWGVRRKQATAASGPLTVTTSAATTIPAGTRWQRADGVVYSLADTIVIDRAGTTEITVTALAAGEAGNTGENTLLTLITPVACVVSDAITVKGFSGGADIESAAELLSRLEYRVQYPPFGGNQFDYVRWAREVSGVTRAWCFPTWKGGGTVGVTFVMDNRSNIFPQPADVERVADYIAGHTDPITGLIVGQPDGVNVTVFAPKAKPVNPRIYISPKTAELKQAITNAINTMFFNEVMPGGALAPSRIIRAVAGVTGLDDFEVRFPTEIQRSENTELLTAGTIEWL</sequence>
<dbReference type="EMBL" id="AF083977">
    <property type="protein sequence ID" value="AAF01125.1"/>
    <property type="molecule type" value="Genomic_DNA"/>
</dbReference>
<dbReference type="RefSeq" id="NP_050651.1">
    <property type="nucleotide sequence ID" value="NC_000929.1"/>
</dbReference>
<dbReference type="PDB" id="9KI1">
    <property type="method" value="EM"/>
    <property type="resolution" value="3.30 A"/>
    <property type="chains" value="H/I/J/K/L/M/O/P/Q/R/S/T=1-360"/>
</dbReference>
<dbReference type="PDBsum" id="9KI1"/>
<dbReference type="EMDB" id="EMD-62362"/>
<dbReference type="SMR" id="Q9T1V2"/>
<dbReference type="GeneID" id="2636250"/>
<dbReference type="KEGG" id="vg:2636250"/>
<dbReference type="Proteomes" id="UP000002611">
    <property type="component" value="Genome"/>
</dbReference>
<dbReference type="GO" id="GO:0030430">
    <property type="term" value="C:host cell cytoplasm"/>
    <property type="evidence" value="ECO:0007669"/>
    <property type="project" value="UniProtKB-SubCell"/>
</dbReference>
<dbReference type="GO" id="GO:0098025">
    <property type="term" value="C:virus tail, baseplate"/>
    <property type="evidence" value="ECO:0007669"/>
    <property type="project" value="UniProtKB-KW"/>
</dbReference>
<dbReference type="GO" id="GO:0098003">
    <property type="term" value="P:viral tail assembly"/>
    <property type="evidence" value="ECO:0007669"/>
    <property type="project" value="UniProtKB-KW"/>
</dbReference>
<dbReference type="InterPro" id="IPR006949">
    <property type="entry name" value="Baseplate_J-like"/>
</dbReference>
<dbReference type="InterPro" id="IPR052399">
    <property type="entry name" value="Phage_Baseplate_Assmbl_Protein"/>
</dbReference>
<dbReference type="PANTHER" id="PTHR37829">
    <property type="entry name" value="PHAGE-LIKE ELEMENT PBSX PROTEIN XKDT"/>
    <property type="match status" value="1"/>
</dbReference>
<dbReference type="PANTHER" id="PTHR37829:SF3">
    <property type="entry name" value="PROTEIN JAYE-RELATED"/>
    <property type="match status" value="1"/>
</dbReference>
<dbReference type="Pfam" id="PF04865">
    <property type="entry name" value="Baseplate_J"/>
    <property type="match status" value="1"/>
</dbReference>
<keyword id="KW-0002">3D-structure</keyword>
<keyword id="KW-1035">Host cytoplasm</keyword>
<keyword id="KW-0426">Late protein</keyword>
<keyword id="KW-1185">Reference proteome</keyword>
<keyword id="KW-1226">Viral baseplate protein</keyword>
<keyword id="KW-1188">Viral release from host cell</keyword>
<keyword id="KW-1245">Viral tail assembly</keyword>
<keyword id="KW-1227">Viral tail protein</keyword>
<keyword id="KW-0946">Virion</keyword>
<organism>
    <name type="scientific">Escherichia phage Mu</name>
    <name type="common">Bacteriophage Mu</name>
    <dbReference type="NCBI Taxonomy" id="2681603"/>
    <lineage>
        <taxon>Viruses</taxon>
        <taxon>Duplodnaviria</taxon>
        <taxon>Heunggongvirae</taxon>
        <taxon>Uroviricota</taxon>
        <taxon>Caudoviricetes</taxon>
        <taxon>Muvirus</taxon>
        <taxon>Muvirus mu</taxon>
    </lineage>
</organism>
<protein>
    <recommendedName>
        <fullName>Baseplate protein gp47</fullName>
    </recommendedName>
    <alternativeName>
        <fullName>Gene product 47</fullName>
        <shortName>gp47</shortName>
    </alternativeName>
    <alternativeName>
        <fullName>Gene product W</fullName>
        <shortName>gpW</shortName>
    </alternativeName>
</protein>
<proteinExistence type="evidence at protein level"/>
<gene>
    <name type="ordered locus">Mup47</name>
</gene>
<accession>Q9T1V2</accession>
<organismHost>
    <name type="scientific">Enterobacteriaceae</name>
    <dbReference type="NCBI Taxonomy" id="543"/>
</organismHost>
<feature type="chain" id="PRO_0000077842" description="Baseplate protein gp47">
    <location>
        <begin position="1"/>
        <end position="360"/>
    </location>
</feature>
<name>BP47_BPMU</name>
<comment type="function">
    <text>Component of the baseplate. Probably involved in tail assembly.</text>
</comment>
<comment type="subunit">
    <text evidence="1">Part of a complex composed of three DNA circularization protein N, three baseplate hub protein gp44 and three sub-complex wedge (made of two copies of each baseplate protein gp46, gp47 and gp48) that forms the baseplate.</text>
</comment>
<comment type="subcellular location">
    <subcellularLocation>
        <location evidence="1">Virion</location>
    </subcellularLocation>
    <subcellularLocation>
        <location evidence="4">Host cytoplasm</location>
    </subcellularLocation>
    <text evidence="1">Baseplate protein.</text>
</comment>
<comment type="induction">
    <text evidence="3">Expressed in the late phase of the viral replicative cycle. Expression of late genes is activated by the viral late transcription activator C.</text>
</comment>
<comment type="disruption phenotype">
    <text evidence="2">No tail is synthesized.</text>
</comment>
<comment type="similarity">
    <text evidence="4">Belongs to the Mu gp47/PBSX XkdT family.</text>
</comment>
<evidence type="ECO:0000269" key="1">
    <source>
    </source>
</evidence>
<evidence type="ECO:0000269" key="2">
    <source>
    </source>
</evidence>
<evidence type="ECO:0000269" key="3">
    <source>
    </source>
</evidence>
<evidence type="ECO:0000305" key="4"/>